<sequence length="476" mass="53495">MASSFSGVLQLTDLDDFIGPSQECIKPIKVEKKAGRAAAKIQIEDDGSYVQINPEGAARKLEKAKITLNDCLACSGCVTSAETILITQQSHEELYKILKQNKTENPLEHKVVVVSVSPQSWASLAARFNLIMQDTAQKLTAFFKQLGVHHVFDTNFSRNFSLLESQREFIQRFKRQKEDKKSLPMLASACPGWICYAEKTHGSFILPYISSTKSPQQVMGSLVKSHFAKEKNLKPNQIYHVTVMPCYDKKLEASRPDFYNQEYETREVDCVITTGEVLRMLEQEGLSLSDVDPSPLDTLFGSAVQEEPVGHQGGGSGGYLEHVFRHAAQELFGVHVDTVVYKPLKNKDFQEVTLEQDGNVVLHFALAYGFRNIQNLVQKLKRGRCPYHYVEVMACPSGCLNGGGQIKAEGEGSKDLLQRVEDLYNTVRTERPEEREEVAQLYGDWLEDKDSAKARQALHTQYHAVEKINSGLTIKW</sequence>
<protein>
    <recommendedName>
        <fullName>Cytosolic Fe-S cluster assembly factor narfl</fullName>
    </recommendedName>
    <alternativeName>
        <fullName>Nuclear prelamin A recognition factor-like protein</fullName>
    </alternativeName>
</protein>
<comment type="function">
    <text evidence="1">Component of the cytosolic iron-sulfur protein assembly (CIA) complex, a multiprotein complex that mediates the incorporation of iron-sulfur cluster into extramitochondrial Fe/S proteins.</text>
</comment>
<comment type="subunit">
    <text evidence="1">Component of the CIA complex.</text>
</comment>
<comment type="similarity">
    <text evidence="3">Belongs to the NARF family.</text>
</comment>
<proteinExistence type="evidence at transcript level"/>
<feature type="chain" id="PRO_0000383692" description="Cytosolic Fe-S cluster assembly factor narfl">
    <location>
        <begin position="1"/>
        <end position="476"/>
    </location>
</feature>
<feature type="binding site" evidence="2">
    <location>
        <position position="24"/>
    </location>
    <ligand>
        <name>[4Fe-4S] cluster</name>
        <dbReference type="ChEBI" id="CHEBI:49883"/>
        <label>1</label>
    </ligand>
</feature>
<feature type="binding site" evidence="2">
    <location>
        <position position="71"/>
    </location>
    <ligand>
        <name>[4Fe-4S] cluster</name>
        <dbReference type="ChEBI" id="CHEBI:49883"/>
        <label>1</label>
    </ligand>
</feature>
<feature type="binding site" evidence="2">
    <location>
        <position position="74"/>
    </location>
    <ligand>
        <name>[4Fe-4S] cluster</name>
        <dbReference type="ChEBI" id="CHEBI:49883"/>
        <label>1</label>
    </ligand>
</feature>
<feature type="binding site" evidence="2">
    <location>
        <position position="77"/>
    </location>
    <ligand>
        <name>[4Fe-4S] cluster</name>
        <dbReference type="ChEBI" id="CHEBI:49883"/>
        <label>1</label>
    </ligand>
</feature>
<feature type="binding site" evidence="2">
    <location>
        <position position="190"/>
    </location>
    <ligand>
        <name>[4Fe-4S] cluster</name>
        <dbReference type="ChEBI" id="CHEBI:49883"/>
        <label>2</label>
    </ligand>
</feature>
<feature type="binding site" evidence="2">
    <location>
        <position position="246"/>
    </location>
    <ligand>
        <name>[4Fe-4S] cluster</name>
        <dbReference type="ChEBI" id="CHEBI:49883"/>
        <label>2</label>
    </ligand>
</feature>
<feature type="binding site" evidence="2">
    <location>
        <position position="395"/>
    </location>
    <ligand>
        <name>[4Fe-4S] cluster</name>
        <dbReference type="ChEBI" id="CHEBI:49883"/>
        <label>2</label>
    </ligand>
</feature>
<feature type="binding site" evidence="2">
    <location>
        <position position="399"/>
    </location>
    <ligand>
        <name>[4Fe-4S] cluster</name>
        <dbReference type="ChEBI" id="CHEBI:49883"/>
        <label>2</label>
    </ligand>
</feature>
<accession>A8WH18</accession>
<gene>
    <name type="primary">narfl</name>
</gene>
<dbReference type="EMBL" id="BC154937">
    <property type="protein sequence ID" value="AAI54938.1"/>
    <property type="molecule type" value="mRNA"/>
</dbReference>
<dbReference type="RefSeq" id="NP_001106557.1">
    <property type="nucleotide sequence ID" value="NM_001113086.1"/>
</dbReference>
<dbReference type="SMR" id="A8WH18"/>
<dbReference type="FunCoup" id="A8WH18">
    <property type="interactions" value="164"/>
</dbReference>
<dbReference type="STRING" id="8364.ENSXETP00000002919"/>
<dbReference type="PaxDb" id="8364-ENSXETP00000024964"/>
<dbReference type="GeneID" id="100127749"/>
<dbReference type="KEGG" id="xtr:100127749"/>
<dbReference type="AGR" id="Xenbase:XB-GENE-987594"/>
<dbReference type="CTD" id="64428"/>
<dbReference type="Xenbase" id="XB-GENE-987594">
    <property type="gene designation" value="ciao3"/>
</dbReference>
<dbReference type="eggNOG" id="KOG2439">
    <property type="taxonomic scope" value="Eukaryota"/>
</dbReference>
<dbReference type="InParanoid" id="A8WH18"/>
<dbReference type="OMA" id="GYLHHVL"/>
<dbReference type="OrthoDB" id="10253113at2759"/>
<dbReference type="Proteomes" id="UP000008143">
    <property type="component" value="Chromosome 9"/>
</dbReference>
<dbReference type="GO" id="GO:0097361">
    <property type="term" value="C:cytosolic [4Fe-4S] assembly targeting complex"/>
    <property type="evidence" value="ECO:0000250"/>
    <property type="project" value="UniProtKB"/>
</dbReference>
<dbReference type="GO" id="GO:0051539">
    <property type="term" value="F:4 iron, 4 sulfur cluster binding"/>
    <property type="evidence" value="ECO:0007669"/>
    <property type="project" value="UniProtKB-KW"/>
</dbReference>
<dbReference type="GO" id="GO:0046872">
    <property type="term" value="F:metal ion binding"/>
    <property type="evidence" value="ECO:0007669"/>
    <property type="project" value="UniProtKB-KW"/>
</dbReference>
<dbReference type="GO" id="GO:0016226">
    <property type="term" value="P:iron-sulfur cluster assembly"/>
    <property type="evidence" value="ECO:0000250"/>
    <property type="project" value="UniProtKB"/>
</dbReference>
<dbReference type="FunFam" id="3.30.70.20:FF:000042">
    <property type="entry name" value="Cytosolic Fe-S cluster assembly factor NAR1"/>
    <property type="match status" value="1"/>
</dbReference>
<dbReference type="Gene3D" id="3.40.50.1780">
    <property type="match status" value="1"/>
</dbReference>
<dbReference type="Gene3D" id="3.40.950.10">
    <property type="entry name" value="Fe-only Hydrogenase (Larger Subunit), Chain L, domain 3"/>
    <property type="match status" value="1"/>
</dbReference>
<dbReference type="InterPro" id="IPR050340">
    <property type="entry name" value="Cytosolic_Fe-S_CAF"/>
</dbReference>
<dbReference type="InterPro" id="IPR009016">
    <property type="entry name" value="Fe_hydrogenase"/>
</dbReference>
<dbReference type="InterPro" id="IPR004108">
    <property type="entry name" value="Fe_hydrogenase_lsu_C"/>
</dbReference>
<dbReference type="InterPro" id="IPR003149">
    <property type="entry name" value="Fe_hydrogenase_ssu"/>
</dbReference>
<dbReference type="PANTHER" id="PTHR11615">
    <property type="entry name" value="NITRATE, FORMATE, IRON DEHYDROGENASE"/>
    <property type="match status" value="1"/>
</dbReference>
<dbReference type="Pfam" id="PF02906">
    <property type="entry name" value="Fe_hyd_lg_C"/>
    <property type="match status" value="1"/>
</dbReference>
<dbReference type="Pfam" id="PF02256">
    <property type="entry name" value="Fe_hyd_SSU"/>
    <property type="match status" value="1"/>
</dbReference>
<dbReference type="SMART" id="SM00902">
    <property type="entry name" value="Fe_hyd_SSU"/>
    <property type="match status" value="1"/>
</dbReference>
<dbReference type="SUPFAM" id="SSF53920">
    <property type="entry name" value="Fe-only hydrogenase"/>
    <property type="match status" value="1"/>
</dbReference>
<organism>
    <name type="scientific">Xenopus tropicalis</name>
    <name type="common">Western clawed frog</name>
    <name type="synonym">Silurana tropicalis</name>
    <dbReference type="NCBI Taxonomy" id="8364"/>
    <lineage>
        <taxon>Eukaryota</taxon>
        <taxon>Metazoa</taxon>
        <taxon>Chordata</taxon>
        <taxon>Craniata</taxon>
        <taxon>Vertebrata</taxon>
        <taxon>Euteleostomi</taxon>
        <taxon>Amphibia</taxon>
        <taxon>Batrachia</taxon>
        <taxon>Anura</taxon>
        <taxon>Pipoidea</taxon>
        <taxon>Pipidae</taxon>
        <taxon>Xenopodinae</taxon>
        <taxon>Xenopus</taxon>
        <taxon>Silurana</taxon>
    </lineage>
</organism>
<evidence type="ECO:0000250" key="1"/>
<evidence type="ECO:0000255" key="2"/>
<evidence type="ECO:0000305" key="3"/>
<reference key="1">
    <citation type="submission" date="2007-11" db="EMBL/GenBank/DDBJ databases">
        <authorList>
            <consortium name="NIH - Xenopus Gene Collection (XGC) project"/>
        </authorList>
    </citation>
    <scope>NUCLEOTIDE SEQUENCE [LARGE SCALE MRNA]</scope>
    <source>
        <strain>PopA</strain>
    </source>
</reference>
<keyword id="KW-0004">4Fe-4S</keyword>
<keyword id="KW-0408">Iron</keyword>
<keyword id="KW-0411">Iron-sulfur</keyword>
<keyword id="KW-0479">Metal-binding</keyword>
<keyword id="KW-1185">Reference proteome</keyword>
<name>NARFL_XENTR</name>